<gene>
    <name evidence="1" type="primary">ilvD</name>
    <name type="ordered locus">Smal_3851</name>
</gene>
<comment type="function">
    <text evidence="1">Functions in the biosynthesis of branched-chain amino acids. Catalyzes the dehydration of (2R,3R)-2,3-dihydroxy-3-methylpentanoate (2,3-dihydroxy-3-methylvalerate) into 2-oxo-3-methylpentanoate (2-oxo-3-methylvalerate) and of (2R)-2,3-dihydroxy-3-methylbutanoate (2,3-dihydroxyisovalerate) into 2-oxo-3-methylbutanoate (2-oxoisovalerate), the penultimate precursor to L-isoleucine and L-valine, respectively.</text>
</comment>
<comment type="catalytic activity">
    <reaction evidence="1">
        <text>(2R)-2,3-dihydroxy-3-methylbutanoate = 3-methyl-2-oxobutanoate + H2O</text>
        <dbReference type="Rhea" id="RHEA:24809"/>
        <dbReference type="ChEBI" id="CHEBI:11851"/>
        <dbReference type="ChEBI" id="CHEBI:15377"/>
        <dbReference type="ChEBI" id="CHEBI:49072"/>
        <dbReference type="EC" id="4.2.1.9"/>
    </reaction>
    <physiologicalReaction direction="left-to-right" evidence="1">
        <dbReference type="Rhea" id="RHEA:24810"/>
    </physiologicalReaction>
</comment>
<comment type="catalytic activity">
    <reaction evidence="1">
        <text>(2R,3R)-2,3-dihydroxy-3-methylpentanoate = (S)-3-methyl-2-oxopentanoate + H2O</text>
        <dbReference type="Rhea" id="RHEA:27694"/>
        <dbReference type="ChEBI" id="CHEBI:15377"/>
        <dbReference type="ChEBI" id="CHEBI:35146"/>
        <dbReference type="ChEBI" id="CHEBI:49258"/>
        <dbReference type="EC" id="4.2.1.9"/>
    </reaction>
    <physiologicalReaction direction="left-to-right" evidence="1">
        <dbReference type="Rhea" id="RHEA:27695"/>
    </physiologicalReaction>
</comment>
<comment type="cofactor">
    <cofactor evidence="1">
        <name>[2Fe-2S] cluster</name>
        <dbReference type="ChEBI" id="CHEBI:190135"/>
    </cofactor>
    <text evidence="1">Binds 1 [2Fe-2S] cluster per subunit. This cluster acts as a Lewis acid cofactor.</text>
</comment>
<comment type="cofactor">
    <cofactor evidence="1">
        <name>Mg(2+)</name>
        <dbReference type="ChEBI" id="CHEBI:18420"/>
    </cofactor>
</comment>
<comment type="pathway">
    <text evidence="1">Amino-acid biosynthesis; L-isoleucine biosynthesis; L-isoleucine from 2-oxobutanoate: step 3/4.</text>
</comment>
<comment type="pathway">
    <text evidence="1">Amino-acid biosynthesis; L-valine biosynthesis; L-valine from pyruvate: step 3/4.</text>
</comment>
<comment type="subunit">
    <text evidence="1">Homodimer.</text>
</comment>
<comment type="similarity">
    <text evidence="1">Belongs to the IlvD/Edd family.</text>
</comment>
<dbReference type="EC" id="4.2.1.9" evidence="1"/>
<dbReference type="EMBL" id="CP001111">
    <property type="protein sequence ID" value="ACF53550.1"/>
    <property type="molecule type" value="Genomic_DNA"/>
</dbReference>
<dbReference type="RefSeq" id="WP_012512419.1">
    <property type="nucleotide sequence ID" value="NC_011071.1"/>
</dbReference>
<dbReference type="SMR" id="B4SMU1"/>
<dbReference type="STRING" id="391008.Smal_3851"/>
<dbReference type="KEGG" id="smt:Smal_3851"/>
<dbReference type="eggNOG" id="COG0129">
    <property type="taxonomic scope" value="Bacteria"/>
</dbReference>
<dbReference type="HOGENOM" id="CLU_014271_4_2_6"/>
<dbReference type="OrthoDB" id="9807077at2"/>
<dbReference type="UniPathway" id="UPA00047">
    <property type="reaction ID" value="UER00057"/>
</dbReference>
<dbReference type="UniPathway" id="UPA00049">
    <property type="reaction ID" value="UER00061"/>
</dbReference>
<dbReference type="Proteomes" id="UP000001867">
    <property type="component" value="Chromosome"/>
</dbReference>
<dbReference type="GO" id="GO:0005829">
    <property type="term" value="C:cytosol"/>
    <property type="evidence" value="ECO:0007669"/>
    <property type="project" value="TreeGrafter"/>
</dbReference>
<dbReference type="GO" id="GO:0051537">
    <property type="term" value="F:2 iron, 2 sulfur cluster binding"/>
    <property type="evidence" value="ECO:0007669"/>
    <property type="project" value="UniProtKB-UniRule"/>
</dbReference>
<dbReference type="GO" id="GO:0004160">
    <property type="term" value="F:dihydroxy-acid dehydratase activity"/>
    <property type="evidence" value="ECO:0007669"/>
    <property type="project" value="UniProtKB-UniRule"/>
</dbReference>
<dbReference type="GO" id="GO:0000287">
    <property type="term" value="F:magnesium ion binding"/>
    <property type="evidence" value="ECO:0007669"/>
    <property type="project" value="UniProtKB-UniRule"/>
</dbReference>
<dbReference type="GO" id="GO:0009097">
    <property type="term" value="P:isoleucine biosynthetic process"/>
    <property type="evidence" value="ECO:0007669"/>
    <property type="project" value="UniProtKB-UniRule"/>
</dbReference>
<dbReference type="GO" id="GO:0009099">
    <property type="term" value="P:L-valine biosynthetic process"/>
    <property type="evidence" value="ECO:0007669"/>
    <property type="project" value="UniProtKB-UniRule"/>
</dbReference>
<dbReference type="FunFam" id="3.50.30.80:FF:000001">
    <property type="entry name" value="Dihydroxy-acid dehydratase"/>
    <property type="match status" value="1"/>
</dbReference>
<dbReference type="Gene3D" id="3.50.30.80">
    <property type="entry name" value="IlvD/EDD C-terminal domain-like"/>
    <property type="match status" value="1"/>
</dbReference>
<dbReference type="HAMAP" id="MF_00012">
    <property type="entry name" value="IlvD"/>
    <property type="match status" value="1"/>
</dbReference>
<dbReference type="InterPro" id="IPR042096">
    <property type="entry name" value="Dihydro-acid_dehy_C"/>
</dbReference>
<dbReference type="InterPro" id="IPR004404">
    <property type="entry name" value="DihydroxyA_deHydtase"/>
</dbReference>
<dbReference type="InterPro" id="IPR020558">
    <property type="entry name" value="DiOHA_6PGluconate_deHydtase_CS"/>
</dbReference>
<dbReference type="InterPro" id="IPR056740">
    <property type="entry name" value="ILV_EDD_C"/>
</dbReference>
<dbReference type="InterPro" id="IPR000581">
    <property type="entry name" value="ILV_EDD_N"/>
</dbReference>
<dbReference type="InterPro" id="IPR037237">
    <property type="entry name" value="IlvD/EDD_N"/>
</dbReference>
<dbReference type="NCBIfam" id="TIGR00110">
    <property type="entry name" value="ilvD"/>
    <property type="match status" value="1"/>
</dbReference>
<dbReference type="NCBIfam" id="NF009103">
    <property type="entry name" value="PRK12448.1"/>
    <property type="match status" value="1"/>
</dbReference>
<dbReference type="PANTHER" id="PTHR43661">
    <property type="entry name" value="D-XYLONATE DEHYDRATASE"/>
    <property type="match status" value="1"/>
</dbReference>
<dbReference type="PANTHER" id="PTHR43661:SF3">
    <property type="entry name" value="D-XYLONATE DEHYDRATASE YAGF-RELATED"/>
    <property type="match status" value="1"/>
</dbReference>
<dbReference type="Pfam" id="PF24877">
    <property type="entry name" value="ILV_EDD_C"/>
    <property type="match status" value="1"/>
</dbReference>
<dbReference type="Pfam" id="PF00920">
    <property type="entry name" value="ILVD_EDD_N"/>
    <property type="match status" value="1"/>
</dbReference>
<dbReference type="SUPFAM" id="SSF143975">
    <property type="entry name" value="IlvD/EDD N-terminal domain-like"/>
    <property type="match status" value="1"/>
</dbReference>
<dbReference type="SUPFAM" id="SSF52016">
    <property type="entry name" value="LeuD/IlvD-like"/>
    <property type="match status" value="1"/>
</dbReference>
<dbReference type="PROSITE" id="PS00886">
    <property type="entry name" value="ILVD_EDD_1"/>
    <property type="match status" value="1"/>
</dbReference>
<dbReference type="PROSITE" id="PS00887">
    <property type="entry name" value="ILVD_EDD_2"/>
    <property type="match status" value="1"/>
</dbReference>
<evidence type="ECO:0000255" key="1">
    <source>
        <dbReference type="HAMAP-Rule" id="MF_00012"/>
    </source>
</evidence>
<name>ILVD_STRM5</name>
<keyword id="KW-0001">2Fe-2S</keyword>
<keyword id="KW-0028">Amino-acid biosynthesis</keyword>
<keyword id="KW-0100">Branched-chain amino acid biosynthesis</keyword>
<keyword id="KW-0408">Iron</keyword>
<keyword id="KW-0411">Iron-sulfur</keyword>
<keyword id="KW-0456">Lyase</keyword>
<keyword id="KW-0460">Magnesium</keyword>
<keyword id="KW-0479">Metal-binding</keyword>
<accession>B4SMU1</accession>
<proteinExistence type="inferred from homology"/>
<reference key="1">
    <citation type="submission" date="2008-06" db="EMBL/GenBank/DDBJ databases">
        <title>Complete sequence of Stenotrophomonas maltophilia R551-3.</title>
        <authorList>
            <consortium name="US DOE Joint Genome Institute"/>
            <person name="Lucas S."/>
            <person name="Copeland A."/>
            <person name="Lapidus A."/>
            <person name="Glavina del Rio T."/>
            <person name="Dalin E."/>
            <person name="Tice H."/>
            <person name="Pitluck S."/>
            <person name="Chain P."/>
            <person name="Malfatti S."/>
            <person name="Shin M."/>
            <person name="Vergez L."/>
            <person name="Lang D."/>
            <person name="Schmutz J."/>
            <person name="Larimer F."/>
            <person name="Land M."/>
            <person name="Hauser L."/>
            <person name="Kyrpides N."/>
            <person name="Mikhailova N."/>
            <person name="Taghavi S."/>
            <person name="Monchy S."/>
            <person name="Newman L."/>
            <person name="Vangronsveld J."/>
            <person name="van der Lelie D."/>
            <person name="Richardson P."/>
        </authorList>
    </citation>
    <scope>NUCLEOTIDE SEQUENCE [LARGE SCALE GENOMIC DNA]</scope>
    <source>
        <strain>R551-3</strain>
    </source>
</reference>
<sequence length="612" mass="64737">MPEYRSRTSTAGRNMAGARALWRATGMKDGDFHKPIIAIANSFTQFVPGHVHLKDLGQLVAREIEKVGGVAKEFNTIAVDDGIAMGHDGMLYSLPSREIIADSVEYMANAHCADALVCISNCDKITPGMLMAALRLNIPVVFVSGGPMEAGKTKLSEHKLDLVDAMVIAADESASDEKVAEFERSACPTCGSCSGMFTANSMNCLTEALGLSLPGNGSTLATHADREQLFLRAGRLIVELCHRWYGGEDPTALPRGIATQAAFANAMTLDIAMGGSTNTILHLLAAAQEAEVDFDLTHIDALSRRVPQLCKVAPNTPKYHMEDVHRAGGVYGILGELARGGLLDTGVPTVHSRSLADAIARWDVAVSSDSSVQDFFRAGPAGISTQVAFSQATRWPTLDVDRAEGCIRSVKHAYSAEGGLAVLRGNLAVDGCVVKTAGVDESIHVFEGNARVYESQDAAVAGILADEVKAGDVVVIRYEGPKGGPGMQEMLYPTSYLKSKGLGKQCALLTDGRFSGGTSGLSIGHVSPEAASGGTIGLVEDGDRIRIDIPARRIDLLLDEATLAQRRADADARGWKPRAPRPRKVTSALKAYALLATSADKGAVRNTALLGD</sequence>
<protein>
    <recommendedName>
        <fullName evidence="1">Dihydroxy-acid dehydratase</fullName>
        <shortName evidence="1">DAD</shortName>
        <ecNumber evidence="1">4.2.1.9</ecNumber>
    </recommendedName>
</protein>
<organism>
    <name type="scientific">Stenotrophomonas maltophilia (strain R551-3)</name>
    <dbReference type="NCBI Taxonomy" id="391008"/>
    <lineage>
        <taxon>Bacteria</taxon>
        <taxon>Pseudomonadati</taxon>
        <taxon>Pseudomonadota</taxon>
        <taxon>Gammaproteobacteria</taxon>
        <taxon>Lysobacterales</taxon>
        <taxon>Lysobacteraceae</taxon>
        <taxon>Stenotrophomonas</taxon>
        <taxon>Stenotrophomonas maltophilia group</taxon>
    </lineage>
</organism>
<feature type="chain" id="PRO_1000089417" description="Dihydroxy-acid dehydratase">
    <location>
        <begin position="1"/>
        <end position="612"/>
    </location>
</feature>
<feature type="active site" description="Proton acceptor" evidence="1">
    <location>
        <position position="515"/>
    </location>
</feature>
<feature type="binding site" evidence="1">
    <location>
        <position position="81"/>
    </location>
    <ligand>
        <name>Mg(2+)</name>
        <dbReference type="ChEBI" id="CHEBI:18420"/>
    </ligand>
</feature>
<feature type="binding site" evidence="1">
    <location>
        <position position="122"/>
    </location>
    <ligand>
        <name>[2Fe-2S] cluster</name>
        <dbReference type="ChEBI" id="CHEBI:190135"/>
    </ligand>
</feature>
<feature type="binding site" evidence="1">
    <location>
        <position position="123"/>
    </location>
    <ligand>
        <name>Mg(2+)</name>
        <dbReference type="ChEBI" id="CHEBI:18420"/>
    </ligand>
</feature>
<feature type="binding site" description="via carbamate group" evidence="1">
    <location>
        <position position="124"/>
    </location>
    <ligand>
        <name>Mg(2+)</name>
        <dbReference type="ChEBI" id="CHEBI:18420"/>
    </ligand>
</feature>
<feature type="binding site" evidence="1">
    <location>
        <position position="193"/>
    </location>
    <ligand>
        <name>[2Fe-2S] cluster</name>
        <dbReference type="ChEBI" id="CHEBI:190135"/>
    </ligand>
</feature>
<feature type="binding site" evidence="1">
    <location>
        <position position="489"/>
    </location>
    <ligand>
        <name>Mg(2+)</name>
        <dbReference type="ChEBI" id="CHEBI:18420"/>
    </ligand>
</feature>
<feature type="modified residue" description="N6-carboxylysine" evidence="1">
    <location>
        <position position="124"/>
    </location>
</feature>